<keyword id="KW-0028">Amino-acid biosynthesis</keyword>
<keyword id="KW-0963">Cytoplasm</keyword>
<keyword id="KW-0521">NADP</keyword>
<keyword id="KW-0560">Oxidoreductase</keyword>
<keyword id="KW-0641">Proline biosynthesis</keyword>
<organism>
    <name type="scientific">Leptospira biflexa serovar Patoc (strain Patoc 1 / Ames)</name>
    <dbReference type="NCBI Taxonomy" id="355278"/>
    <lineage>
        <taxon>Bacteria</taxon>
        <taxon>Pseudomonadati</taxon>
        <taxon>Spirochaetota</taxon>
        <taxon>Spirochaetia</taxon>
        <taxon>Leptospirales</taxon>
        <taxon>Leptospiraceae</taxon>
        <taxon>Leptospira</taxon>
    </lineage>
</organism>
<proteinExistence type="inferred from homology"/>
<dbReference type="EC" id="1.2.1.41" evidence="1"/>
<dbReference type="EMBL" id="CP000777">
    <property type="protein sequence ID" value="ABZ94232.1"/>
    <property type="molecule type" value="Genomic_DNA"/>
</dbReference>
<dbReference type="RefSeq" id="WP_012388762.1">
    <property type="nucleotide sequence ID" value="NC_010842.1"/>
</dbReference>
<dbReference type="SMR" id="B0S9A5"/>
<dbReference type="KEGG" id="lbf:LBF_1725"/>
<dbReference type="HOGENOM" id="CLU_030231_0_0_12"/>
<dbReference type="UniPathway" id="UPA00098">
    <property type="reaction ID" value="UER00360"/>
</dbReference>
<dbReference type="GO" id="GO:0005737">
    <property type="term" value="C:cytoplasm"/>
    <property type="evidence" value="ECO:0007669"/>
    <property type="project" value="UniProtKB-SubCell"/>
</dbReference>
<dbReference type="GO" id="GO:0004350">
    <property type="term" value="F:glutamate-5-semialdehyde dehydrogenase activity"/>
    <property type="evidence" value="ECO:0007669"/>
    <property type="project" value="UniProtKB-UniRule"/>
</dbReference>
<dbReference type="GO" id="GO:0050661">
    <property type="term" value="F:NADP binding"/>
    <property type="evidence" value="ECO:0007669"/>
    <property type="project" value="InterPro"/>
</dbReference>
<dbReference type="GO" id="GO:0055129">
    <property type="term" value="P:L-proline biosynthetic process"/>
    <property type="evidence" value="ECO:0007669"/>
    <property type="project" value="UniProtKB-UniRule"/>
</dbReference>
<dbReference type="CDD" id="cd07079">
    <property type="entry name" value="ALDH_F18-19_ProA-GPR"/>
    <property type="match status" value="1"/>
</dbReference>
<dbReference type="Gene3D" id="3.40.605.10">
    <property type="entry name" value="Aldehyde Dehydrogenase, Chain A, domain 1"/>
    <property type="match status" value="1"/>
</dbReference>
<dbReference type="Gene3D" id="3.40.309.10">
    <property type="entry name" value="Aldehyde Dehydrogenase, Chain A, domain 2"/>
    <property type="match status" value="1"/>
</dbReference>
<dbReference type="HAMAP" id="MF_00412">
    <property type="entry name" value="ProA"/>
    <property type="match status" value="1"/>
</dbReference>
<dbReference type="InterPro" id="IPR016161">
    <property type="entry name" value="Ald_DH/histidinol_DH"/>
</dbReference>
<dbReference type="InterPro" id="IPR016163">
    <property type="entry name" value="Ald_DH_C"/>
</dbReference>
<dbReference type="InterPro" id="IPR016162">
    <property type="entry name" value="Ald_DH_N"/>
</dbReference>
<dbReference type="InterPro" id="IPR015590">
    <property type="entry name" value="Aldehyde_DH_dom"/>
</dbReference>
<dbReference type="InterPro" id="IPR012134">
    <property type="entry name" value="Glu-5-SA_DH"/>
</dbReference>
<dbReference type="InterPro" id="IPR000965">
    <property type="entry name" value="GPR_dom"/>
</dbReference>
<dbReference type="NCBIfam" id="NF001221">
    <property type="entry name" value="PRK00197.1"/>
    <property type="match status" value="1"/>
</dbReference>
<dbReference type="NCBIfam" id="TIGR00407">
    <property type="entry name" value="proA"/>
    <property type="match status" value="1"/>
</dbReference>
<dbReference type="PANTHER" id="PTHR11063:SF8">
    <property type="entry name" value="DELTA-1-PYRROLINE-5-CARBOXYLATE SYNTHASE"/>
    <property type="match status" value="1"/>
</dbReference>
<dbReference type="PANTHER" id="PTHR11063">
    <property type="entry name" value="GLUTAMATE SEMIALDEHYDE DEHYDROGENASE"/>
    <property type="match status" value="1"/>
</dbReference>
<dbReference type="Pfam" id="PF00171">
    <property type="entry name" value="Aldedh"/>
    <property type="match status" value="1"/>
</dbReference>
<dbReference type="PIRSF" id="PIRSF000151">
    <property type="entry name" value="GPR"/>
    <property type="match status" value="1"/>
</dbReference>
<dbReference type="SUPFAM" id="SSF53720">
    <property type="entry name" value="ALDH-like"/>
    <property type="match status" value="1"/>
</dbReference>
<name>PROA_LEPBA</name>
<sequence length="421" mass="46198">MTFEATEYAKSIATKAKEASRALKSLTTLQKNSVLKRVETLLLENETAIIKENQIDLQNGIQKGLSSAMMDRLLLDSKRIQSMAKSIEEIRNLPDPVGEVVRGTILPNGLELLTKRVPIGVVMTIFESRPNVIVDIASLSFKSGNACILRGGSEAYHSNLILSSLFHQAIGESNLPSVTKDVVSFVENTDREAMVPFFQLDDLIDVIVPRGGEALIRFVSENSKIPVIKHDKGVTNLYLSNKAKEDIVLPILINSKVQRPGVCNALENLFIHKDYPHIQTLLSDLQKAGVQVLGDQSTQSIFPNLPLATEADFYTEFLDTRLSVKIVKSVEDAMQNIQNYSSGHTECILSEDESEIQTFRQGLDSAAIFVNCSTRFHDGGEFGLGAEVGISTGKLHVRGPMGLIHLTTTTTYVTGKGQVRG</sequence>
<gene>
    <name evidence="1" type="primary">proA</name>
    <name type="ordered locus">LBF_1725</name>
</gene>
<feature type="chain" id="PRO_0000340889" description="Gamma-glutamyl phosphate reductase">
    <location>
        <begin position="1"/>
        <end position="421"/>
    </location>
</feature>
<evidence type="ECO:0000255" key="1">
    <source>
        <dbReference type="HAMAP-Rule" id="MF_00412"/>
    </source>
</evidence>
<comment type="function">
    <text evidence="1">Catalyzes the NADPH-dependent reduction of L-glutamate 5-phosphate into L-glutamate 5-semialdehyde and phosphate. The product spontaneously undergoes cyclization to form 1-pyrroline-5-carboxylate.</text>
</comment>
<comment type="catalytic activity">
    <reaction evidence="1">
        <text>L-glutamate 5-semialdehyde + phosphate + NADP(+) = L-glutamyl 5-phosphate + NADPH + H(+)</text>
        <dbReference type="Rhea" id="RHEA:19541"/>
        <dbReference type="ChEBI" id="CHEBI:15378"/>
        <dbReference type="ChEBI" id="CHEBI:43474"/>
        <dbReference type="ChEBI" id="CHEBI:57783"/>
        <dbReference type="ChEBI" id="CHEBI:58066"/>
        <dbReference type="ChEBI" id="CHEBI:58274"/>
        <dbReference type="ChEBI" id="CHEBI:58349"/>
        <dbReference type="EC" id="1.2.1.41"/>
    </reaction>
</comment>
<comment type="pathway">
    <text evidence="1">Amino-acid biosynthesis; L-proline biosynthesis; L-glutamate 5-semialdehyde from L-glutamate: step 2/2.</text>
</comment>
<comment type="subcellular location">
    <subcellularLocation>
        <location evidence="1">Cytoplasm</location>
    </subcellularLocation>
</comment>
<comment type="similarity">
    <text evidence="1">Belongs to the gamma-glutamyl phosphate reductase family.</text>
</comment>
<accession>B0S9A5</accession>
<protein>
    <recommendedName>
        <fullName evidence="1">Gamma-glutamyl phosphate reductase</fullName>
        <shortName evidence="1">GPR</shortName>
        <ecNumber evidence="1">1.2.1.41</ecNumber>
    </recommendedName>
    <alternativeName>
        <fullName evidence="1">Glutamate-5-semialdehyde dehydrogenase</fullName>
    </alternativeName>
    <alternativeName>
        <fullName evidence="1">Glutamyl-gamma-semialdehyde dehydrogenase</fullName>
        <shortName evidence="1">GSA dehydrogenase</shortName>
    </alternativeName>
</protein>
<reference key="1">
    <citation type="journal article" date="2008" name="PLoS ONE">
        <title>Genome sequence of the saprophyte Leptospira biflexa provides insights into the evolution of Leptospira and the pathogenesis of leptospirosis.</title>
        <authorList>
            <person name="Picardeau M."/>
            <person name="Bulach D.M."/>
            <person name="Bouchier C."/>
            <person name="Zuerner R.L."/>
            <person name="Zidane N."/>
            <person name="Wilson P.J."/>
            <person name="Creno S."/>
            <person name="Kuczek E.S."/>
            <person name="Bommezzadri S."/>
            <person name="Davis J.C."/>
            <person name="McGrath A."/>
            <person name="Johnson M.J."/>
            <person name="Boursaux-Eude C."/>
            <person name="Seemann T."/>
            <person name="Rouy Z."/>
            <person name="Coppel R.L."/>
            <person name="Rood J.I."/>
            <person name="Lajus A."/>
            <person name="Davies J.K."/>
            <person name="Medigue C."/>
            <person name="Adler B."/>
        </authorList>
    </citation>
    <scope>NUCLEOTIDE SEQUENCE [LARGE SCALE GENOMIC DNA]</scope>
    <source>
        <strain>Patoc 1 / Ames</strain>
    </source>
</reference>